<name>PYRC_YERPE</name>
<gene>
    <name evidence="1" type="primary">pyrC</name>
    <name type="ordered locus">YPO1587</name>
    <name type="ordered locus">y1746</name>
    <name type="ordered locus">YP_2265</name>
</gene>
<proteinExistence type="evidence at protein level"/>
<organism>
    <name type="scientific">Yersinia pestis</name>
    <dbReference type="NCBI Taxonomy" id="632"/>
    <lineage>
        <taxon>Bacteria</taxon>
        <taxon>Pseudomonadati</taxon>
        <taxon>Pseudomonadota</taxon>
        <taxon>Gammaproteobacteria</taxon>
        <taxon>Enterobacterales</taxon>
        <taxon>Yersiniaceae</taxon>
        <taxon>Yersinia</taxon>
    </lineage>
</organism>
<dbReference type="EC" id="3.5.2.3" evidence="1"/>
<dbReference type="EMBL" id="AL590842">
    <property type="protein sequence ID" value="CAL20232.1"/>
    <property type="molecule type" value="Genomic_DNA"/>
</dbReference>
<dbReference type="EMBL" id="AE009952">
    <property type="protein sequence ID" value="AAM85314.1"/>
    <property type="molecule type" value="Genomic_DNA"/>
</dbReference>
<dbReference type="EMBL" id="AE017042">
    <property type="protein sequence ID" value="AAS62471.1"/>
    <property type="molecule type" value="Genomic_DNA"/>
</dbReference>
<dbReference type="PIR" id="AF0193">
    <property type="entry name" value="AF0193"/>
</dbReference>
<dbReference type="RefSeq" id="WP_002213109.1">
    <property type="nucleotide sequence ID" value="NZ_WUCM01000147.1"/>
</dbReference>
<dbReference type="RefSeq" id="YP_002346598.1">
    <property type="nucleotide sequence ID" value="NC_003143.1"/>
</dbReference>
<dbReference type="PDB" id="6CTY">
    <property type="method" value="X-ray"/>
    <property type="resolution" value="2.41 A"/>
    <property type="chains" value="A/B/C/D/E/F=1-348"/>
</dbReference>
<dbReference type="PDBsum" id="6CTY"/>
<dbReference type="SMR" id="Q8ZFU4"/>
<dbReference type="IntAct" id="Q8ZFU4">
    <property type="interactions" value="4"/>
</dbReference>
<dbReference type="STRING" id="214092.YPO1587"/>
<dbReference type="MEROPS" id="M38.A02"/>
<dbReference type="PaxDb" id="214092-YPO1587"/>
<dbReference type="DNASU" id="1146693"/>
<dbReference type="EnsemblBacteria" id="AAS62471">
    <property type="protein sequence ID" value="AAS62471"/>
    <property type="gene ID" value="YP_2265"/>
</dbReference>
<dbReference type="GeneID" id="57976984"/>
<dbReference type="KEGG" id="ype:YPO1587"/>
<dbReference type="KEGG" id="ypk:y1746"/>
<dbReference type="KEGG" id="ypm:YP_2265"/>
<dbReference type="PATRIC" id="fig|214092.21.peg.1929"/>
<dbReference type="eggNOG" id="COG0418">
    <property type="taxonomic scope" value="Bacteria"/>
</dbReference>
<dbReference type="HOGENOM" id="CLU_041558_1_0_6"/>
<dbReference type="OMA" id="TLHHISM"/>
<dbReference type="OrthoDB" id="9808095at2"/>
<dbReference type="BRENDA" id="3.5.2.3">
    <property type="organism ID" value="4559"/>
</dbReference>
<dbReference type="UniPathway" id="UPA00070">
    <property type="reaction ID" value="UER00117"/>
</dbReference>
<dbReference type="Proteomes" id="UP000000815">
    <property type="component" value="Chromosome"/>
</dbReference>
<dbReference type="Proteomes" id="UP000001019">
    <property type="component" value="Chromosome"/>
</dbReference>
<dbReference type="Proteomes" id="UP000002490">
    <property type="component" value="Chromosome"/>
</dbReference>
<dbReference type="GO" id="GO:0005737">
    <property type="term" value="C:cytoplasm"/>
    <property type="evidence" value="ECO:0000318"/>
    <property type="project" value="GO_Central"/>
</dbReference>
<dbReference type="GO" id="GO:0005829">
    <property type="term" value="C:cytosol"/>
    <property type="evidence" value="ECO:0000318"/>
    <property type="project" value="GO_Central"/>
</dbReference>
<dbReference type="GO" id="GO:0004151">
    <property type="term" value="F:dihydroorotase activity"/>
    <property type="evidence" value="ECO:0000318"/>
    <property type="project" value="GO_Central"/>
</dbReference>
<dbReference type="GO" id="GO:0008270">
    <property type="term" value="F:zinc ion binding"/>
    <property type="evidence" value="ECO:0007669"/>
    <property type="project" value="UniProtKB-UniRule"/>
</dbReference>
<dbReference type="GO" id="GO:0006207">
    <property type="term" value="P:'de novo' pyrimidine nucleobase biosynthetic process"/>
    <property type="evidence" value="ECO:0000318"/>
    <property type="project" value="GO_Central"/>
</dbReference>
<dbReference type="GO" id="GO:0044205">
    <property type="term" value="P:'de novo' UMP biosynthetic process"/>
    <property type="evidence" value="ECO:0007669"/>
    <property type="project" value="UniProtKB-UniRule"/>
</dbReference>
<dbReference type="GO" id="GO:0006221">
    <property type="term" value="P:pyrimidine nucleotide biosynthetic process"/>
    <property type="evidence" value="ECO:0000318"/>
    <property type="project" value="GO_Central"/>
</dbReference>
<dbReference type="CDD" id="cd01294">
    <property type="entry name" value="DHOase"/>
    <property type="match status" value="1"/>
</dbReference>
<dbReference type="FunFam" id="3.20.20.140:FF:000006">
    <property type="entry name" value="Dihydroorotase"/>
    <property type="match status" value="1"/>
</dbReference>
<dbReference type="Gene3D" id="3.20.20.140">
    <property type="entry name" value="Metal-dependent hydrolases"/>
    <property type="match status" value="1"/>
</dbReference>
<dbReference type="HAMAP" id="MF_00219">
    <property type="entry name" value="PyrC_classII"/>
    <property type="match status" value="1"/>
</dbReference>
<dbReference type="InterPro" id="IPR006680">
    <property type="entry name" value="Amidohydro-rel"/>
</dbReference>
<dbReference type="InterPro" id="IPR004721">
    <property type="entry name" value="DHOdimr"/>
</dbReference>
<dbReference type="InterPro" id="IPR002195">
    <property type="entry name" value="Dihydroorotase_CS"/>
</dbReference>
<dbReference type="InterPro" id="IPR032466">
    <property type="entry name" value="Metal_Hydrolase"/>
</dbReference>
<dbReference type="NCBIfam" id="TIGR00856">
    <property type="entry name" value="pyrC_dimer"/>
    <property type="match status" value="1"/>
</dbReference>
<dbReference type="PANTHER" id="PTHR43137">
    <property type="entry name" value="DIHYDROOROTASE"/>
    <property type="match status" value="1"/>
</dbReference>
<dbReference type="PANTHER" id="PTHR43137:SF1">
    <property type="entry name" value="DIHYDROOROTASE"/>
    <property type="match status" value="1"/>
</dbReference>
<dbReference type="Pfam" id="PF01979">
    <property type="entry name" value="Amidohydro_1"/>
    <property type="match status" value="1"/>
</dbReference>
<dbReference type="PIRSF" id="PIRSF001237">
    <property type="entry name" value="DHOdimr"/>
    <property type="match status" value="1"/>
</dbReference>
<dbReference type="SUPFAM" id="SSF51556">
    <property type="entry name" value="Metallo-dependent hydrolases"/>
    <property type="match status" value="1"/>
</dbReference>
<dbReference type="PROSITE" id="PS00483">
    <property type="entry name" value="DIHYDROOROTASE_2"/>
    <property type="match status" value="1"/>
</dbReference>
<comment type="function">
    <text evidence="1">Catalyzes the reversible cyclization of carbamoyl aspartate to dihydroorotate.</text>
</comment>
<comment type="catalytic activity">
    <reaction evidence="1">
        <text>(S)-dihydroorotate + H2O = N-carbamoyl-L-aspartate + H(+)</text>
        <dbReference type="Rhea" id="RHEA:24296"/>
        <dbReference type="ChEBI" id="CHEBI:15377"/>
        <dbReference type="ChEBI" id="CHEBI:15378"/>
        <dbReference type="ChEBI" id="CHEBI:30864"/>
        <dbReference type="ChEBI" id="CHEBI:32814"/>
        <dbReference type="EC" id="3.5.2.3"/>
    </reaction>
</comment>
<comment type="cofactor">
    <cofactor evidence="1 2">
        <name>Zn(2+)</name>
        <dbReference type="ChEBI" id="CHEBI:29105"/>
    </cofactor>
    <text evidence="1 2">Binds 2 Zn(2+) ions per subunit.</text>
</comment>
<comment type="pathway">
    <text evidence="1">Pyrimidine metabolism; UMP biosynthesis via de novo pathway; (S)-dihydroorotate from bicarbonate: step 3/3.</text>
</comment>
<comment type="subunit">
    <text evidence="1">Homodimer.</text>
</comment>
<comment type="similarity">
    <text evidence="1 3">Belongs to the metallo-dependent hydrolases superfamily. DHOase family. Class II DHOase subfamily.</text>
</comment>
<keyword id="KW-0002">3D-structure</keyword>
<keyword id="KW-0378">Hydrolase</keyword>
<keyword id="KW-0479">Metal-binding</keyword>
<keyword id="KW-0665">Pyrimidine biosynthesis</keyword>
<keyword id="KW-1185">Reference proteome</keyword>
<keyword id="KW-0862">Zinc</keyword>
<reference key="1">
    <citation type="journal article" date="2001" name="Nature">
        <title>Genome sequence of Yersinia pestis, the causative agent of plague.</title>
        <authorList>
            <person name="Parkhill J."/>
            <person name="Wren B.W."/>
            <person name="Thomson N.R."/>
            <person name="Titball R.W."/>
            <person name="Holden M.T.G."/>
            <person name="Prentice M.B."/>
            <person name="Sebaihia M."/>
            <person name="James K.D."/>
            <person name="Churcher C.M."/>
            <person name="Mungall K.L."/>
            <person name="Baker S."/>
            <person name="Basham D."/>
            <person name="Bentley S.D."/>
            <person name="Brooks K."/>
            <person name="Cerdeno-Tarraga A.-M."/>
            <person name="Chillingworth T."/>
            <person name="Cronin A."/>
            <person name="Davies R.M."/>
            <person name="Davis P."/>
            <person name="Dougan G."/>
            <person name="Feltwell T."/>
            <person name="Hamlin N."/>
            <person name="Holroyd S."/>
            <person name="Jagels K."/>
            <person name="Karlyshev A.V."/>
            <person name="Leather S."/>
            <person name="Moule S."/>
            <person name="Oyston P.C.F."/>
            <person name="Quail M.A."/>
            <person name="Rutherford K.M."/>
            <person name="Simmonds M."/>
            <person name="Skelton J."/>
            <person name="Stevens K."/>
            <person name="Whitehead S."/>
            <person name="Barrell B.G."/>
        </authorList>
    </citation>
    <scope>NUCLEOTIDE SEQUENCE [LARGE SCALE GENOMIC DNA]</scope>
    <source>
        <strain>CO-92 / Biovar Orientalis</strain>
    </source>
</reference>
<reference key="2">
    <citation type="journal article" date="2002" name="J. Bacteriol.">
        <title>Genome sequence of Yersinia pestis KIM.</title>
        <authorList>
            <person name="Deng W."/>
            <person name="Burland V."/>
            <person name="Plunkett G. III"/>
            <person name="Boutin A."/>
            <person name="Mayhew G.F."/>
            <person name="Liss P."/>
            <person name="Perna N.T."/>
            <person name="Rose D.J."/>
            <person name="Mau B."/>
            <person name="Zhou S."/>
            <person name="Schwartz D.C."/>
            <person name="Fetherston J.D."/>
            <person name="Lindler L.E."/>
            <person name="Brubaker R.R."/>
            <person name="Plano G.V."/>
            <person name="Straley S.C."/>
            <person name="McDonough K.A."/>
            <person name="Nilles M.L."/>
            <person name="Matson J.S."/>
            <person name="Blattner F.R."/>
            <person name="Perry R.D."/>
        </authorList>
    </citation>
    <scope>NUCLEOTIDE SEQUENCE [LARGE SCALE GENOMIC DNA]</scope>
    <source>
        <strain>KIM10+ / Biovar Mediaevalis</strain>
    </source>
</reference>
<reference key="3">
    <citation type="journal article" date="2004" name="DNA Res.">
        <title>Complete genome sequence of Yersinia pestis strain 91001, an isolate avirulent to humans.</title>
        <authorList>
            <person name="Song Y."/>
            <person name="Tong Z."/>
            <person name="Wang J."/>
            <person name="Wang L."/>
            <person name="Guo Z."/>
            <person name="Han Y."/>
            <person name="Zhang J."/>
            <person name="Pei D."/>
            <person name="Zhou D."/>
            <person name="Qin H."/>
            <person name="Pang X."/>
            <person name="Han Y."/>
            <person name="Zhai J."/>
            <person name="Li M."/>
            <person name="Cui B."/>
            <person name="Qi Z."/>
            <person name="Jin L."/>
            <person name="Dai R."/>
            <person name="Chen F."/>
            <person name="Li S."/>
            <person name="Ye C."/>
            <person name="Du Z."/>
            <person name="Lin W."/>
            <person name="Wang J."/>
            <person name="Yu J."/>
            <person name="Yang H."/>
            <person name="Wang J."/>
            <person name="Huang P."/>
            <person name="Yang R."/>
        </authorList>
    </citation>
    <scope>NUCLEOTIDE SEQUENCE [LARGE SCALE GENOMIC DNA]</scope>
    <source>
        <strain>91001 / Biovar Mediaevalis</strain>
    </source>
</reference>
<reference evidence="4" key="4">
    <citation type="submission" date="2017-02" db="PDB data bank">
        <title>Crystal structure of dihydroorotase pyrC from Yersinia pestis in complex with zinc and unknown ligand at 2.4 A resolution.</title>
        <authorList>
            <person name="Lipowska J."/>
            <person name="Shabalin I.G."/>
            <person name="Anderson W.F."/>
            <person name="Minor W."/>
        </authorList>
    </citation>
    <scope>X-RAY CRYSTALLOGRAPHY (2.41 ANGSTROMS) IN COMPLEX WITH ZINC</scope>
    <scope>COFACTOR</scope>
</reference>
<accession>Q8ZFU4</accession>
<accession>Q0WGJ0</accession>
<feature type="chain" id="PRO_0000147225" description="Dihydroorotase">
    <location>
        <begin position="1"/>
        <end position="348"/>
    </location>
</feature>
<feature type="active site" evidence="1">
    <location>
        <position position="251"/>
    </location>
</feature>
<feature type="binding site" evidence="1 2">
    <location>
        <position position="17"/>
    </location>
    <ligand>
        <name>Zn(2+)</name>
        <dbReference type="ChEBI" id="CHEBI:29105"/>
        <label>1</label>
    </ligand>
</feature>
<feature type="binding site" evidence="1">
    <location>
        <begin position="19"/>
        <end position="21"/>
    </location>
    <ligand>
        <name>substrate</name>
    </ligand>
</feature>
<feature type="binding site" evidence="1 2">
    <location>
        <position position="19"/>
    </location>
    <ligand>
        <name>Zn(2+)</name>
        <dbReference type="ChEBI" id="CHEBI:29105"/>
        <label>1</label>
    </ligand>
</feature>
<feature type="binding site" evidence="1">
    <location>
        <position position="45"/>
    </location>
    <ligand>
        <name>substrate</name>
    </ligand>
</feature>
<feature type="binding site" description="via carbamate group" evidence="1 2">
    <location>
        <position position="103"/>
    </location>
    <ligand>
        <name>Zn(2+)</name>
        <dbReference type="ChEBI" id="CHEBI:29105"/>
        <label>1</label>
    </ligand>
</feature>
<feature type="binding site" description="via carbamate group" evidence="1 2">
    <location>
        <position position="103"/>
    </location>
    <ligand>
        <name>Zn(2+)</name>
        <dbReference type="ChEBI" id="CHEBI:29105"/>
        <label>2</label>
    </ligand>
</feature>
<feature type="binding site" evidence="1">
    <location>
        <position position="140"/>
    </location>
    <ligand>
        <name>substrate</name>
    </ligand>
</feature>
<feature type="binding site" evidence="1 2">
    <location>
        <position position="140"/>
    </location>
    <ligand>
        <name>Zn(2+)</name>
        <dbReference type="ChEBI" id="CHEBI:29105"/>
        <label>2</label>
    </ligand>
</feature>
<feature type="binding site" evidence="1 2">
    <location>
        <position position="178"/>
    </location>
    <ligand>
        <name>Zn(2+)</name>
        <dbReference type="ChEBI" id="CHEBI:29105"/>
        <label>2</label>
    </ligand>
</feature>
<feature type="binding site" evidence="1">
    <location>
        <position position="223"/>
    </location>
    <ligand>
        <name>substrate</name>
    </ligand>
</feature>
<feature type="binding site" evidence="1 2">
    <location>
        <position position="251"/>
    </location>
    <ligand>
        <name>Zn(2+)</name>
        <dbReference type="ChEBI" id="CHEBI:29105"/>
        <label>1</label>
    </ligand>
</feature>
<feature type="binding site" evidence="1">
    <location>
        <position position="255"/>
    </location>
    <ligand>
        <name>substrate</name>
    </ligand>
</feature>
<feature type="binding site" evidence="1">
    <location>
        <position position="267"/>
    </location>
    <ligand>
        <name>substrate</name>
    </ligand>
</feature>
<feature type="modified residue" description="N6-carboxylysine" evidence="1">
    <location>
        <position position="103"/>
    </location>
</feature>
<feature type="strand" evidence="5">
    <location>
        <begin position="7"/>
        <end position="11"/>
    </location>
</feature>
<feature type="strand" evidence="5">
    <location>
        <begin position="15"/>
        <end position="18"/>
    </location>
</feature>
<feature type="helix" evidence="5">
    <location>
        <begin position="23"/>
        <end position="34"/>
    </location>
</feature>
<feature type="strand" evidence="5">
    <location>
        <begin position="38"/>
        <end position="42"/>
    </location>
</feature>
<feature type="strand" evidence="5">
    <location>
        <begin position="46"/>
        <end position="48"/>
    </location>
</feature>
<feature type="helix" evidence="5">
    <location>
        <begin position="53"/>
        <end position="66"/>
    </location>
</feature>
<feature type="strand" evidence="5">
    <location>
        <begin position="74"/>
        <end position="80"/>
    </location>
</feature>
<feature type="helix" evidence="5">
    <location>
        <begin position="87"/>
        <end position="95"/>
    </location>
</feature>
<feature type="strand" evidence="5">
    <location>
        <begin position="98"/>
        <end position="104"/>
    </location>
</feature>
<feature type="strand" evidence="5">
    <location>
        <begin position="116"/>
        <end position="119"/>
    </location>
</feature>
<feature type="helix" evidence="5">
    <location>
        <begin position="120"/>
        <end position="123"/>
    </location>
</feature>
<feature type="helix" evidence="5">
    <location>
        <begin position="124"/>
        <end position="133"/>
    </location>
</feature>
<feature type="strand" evidence="5">
    <location>
        <begin position="137"/>
        <end position="139"/>
    </location>
</feature>
<feature type="helix" evidence="5">
    <location>
        <begin position="150"/>
        <end position="152"/>
    </location>
</feature>
<feature type="helix" evidence="5">
    <location>
        <begin position="153"/>
        <end position="160"/>
    </location>
</feature>
<feature type="helix" evidence="5">
    <location>
        <begin position="162"/>
        <end position="168"/>
    </location>
</feature>
<feature type="strand" evidence="5">
    <location>
        <begin position="174"/>
        <end position="176"/>
    </location>
</feature>
<feature type="helix" evidence="5">
    <location>
        <begin position="182"/>
        <end position="189"/>
    </location>
</feature>
<feature type="strand" evidence="5">
    <location>
        <begin position="195"/>
        <end position="199"/>
    </location>
</feature>
<feature type="helix" evidence="5">
    <location>
        <begin position="201"/>
        <end position="205"/>
    </location>
</feature>
<feature type="helix" evidence="5">
    <location>
        <begin position="208"/>
        <end position="212"/>
    </location>
</feature>
<feature type="helix" evidence="5">
    <location>
        <begin position="218"/>
        <end position="220"/>
    </location>
</feature>
<feature type="helix" evidence="5">
    <location>
        <begin position="229"/>
        <end position="240"/>
    </location>
</feature>
<feature type="strand" evidence="5">
    <location>
        <begin position="246"/>
        <end position="248"/>
    </location>
</feature>
<feature type="helix" evidence="5">
    <location>
        <begin position="257"/>
        <end position="260"/>
    </location>
</feature>
<feature type="strand" evidence="5">
    <location>
        <begin position="261"/>
        <end position="265"/>
    </location>
</feature>
<feature type="helix" evidence="5">
    <location>
        <begin position="275"/>
        <end position="285"/>
    </location>
</feature>
<feature type="helix" evidence="5">
    <location>
        <begin position="289"/>
        <end position="291"/>
    </location>
</feature>
<feature type="helix" evidence="5">
    <location>
        <begin position="292"/>
        <end position="297"/>
    </location>
</feature>
<feature type="helix" evidence="5">
    <location>
        <begin position="299"/>
        <end position="304"/>
    </location>
</feature>
<feature type="strand" evidence="5">
    <location>
        <begin position="312"/>
        <end position="316"/>
    </location>
</feature>
<feature type="strand" evidence="5">
    <location>
        <begin position="326"/>
        <end position="328"/>
    </location>
</feature>
<feature type="strand" evidence="5">
    <location>
        <begin position="331"/>
        <end position="333"/>
    </location>
</feature>
<feature type="turn" evidence="5">
    <location>
        <begin position="336"/>
        <end position="339"/>
    </location>
</feature>
<feature type="strand" evidence="5">
    <location>
        <begin position="341"/>
        <end position="343"/>
    </location>
</feature>
<protein>
    <recommendedName>
        <fullName evidence="1">Dihydroorotase</fullName>
        <shortName evidence="1">DHOase</shortName>
        <ecNumber evidence="1">3.5.2.3</ecNumber>
    </recommendedName>
</protein>
<evidence type="ECO:0000255" key="1">
    <source>
        <dbReference type="HAMAP-Rule" id="MF_00219"/>
    </source>
</evidence>
<evidence type="ECO:0000269" key="2">
    <source ref="4"/>
</evidence>
<evidence type="ECO:0000305" key="3"/>
<evidence type="ECO:0007744" key="4">
    <source>
        <dbReference type="PDB" id="6CTY"/>
    </source>
</evidence>
<evidence type="ECO:0007829" key="5">
    <source>
        <dbReference type="PDB" id="6CTY"/>
    </source>
</evidence>
<sequence>MTAQPQTLKIRRPDDWHIHLRDDEMLSTVLPYTSEVFARAIVMPNLAQPITTVASAIAYRERILAAVPAGHKFTPLMTCYLTNSLDAKELTTGFEQGVFTAAKLYPANATTNSTHGVSDIPAIYPLFEQMQKIGMPLLIHGEVTDAAVDIFDREARFIDQILEPIRQKFPELKIVFEHITTKDAADYVLAGNRFLGATVTPQHLMFNRNHMLVGGIRPHLFCLPILKRSTHQQALRAAVASGSDRFFLGTDSAPHAKHRKESSCGCAGVFNAPAALPAYASVFEELNALQHLEAFCALNGPRFYGLPVNDDVVELVRTPFLQPEEIPLGNESVIPFLAGQTLNWSVKR</sequence>